<organism>
    <name type="scientific">Campylobacter jejuni subsp. jejuni serotype O:6 (strain 81116 / NCTC 11828)</name>
    <dbReference type="NCBI Taxonomy" id="407148"/>
    <lineage>
        <taxon>Bacteria</taxon>
        <taxon>Pseudomonadati</taxon>
        <taxon>Campylobacterota</taxon>
        <taxon>Epsilonproteobacteria</taxon>
        <taxon>Campylobacterales</taxon>
        <taxon>Campylobacteraceae</taxon>
        <taxon>Campylobacter</taxon>
    </lineage>
</organism>
<feature type="chain" id="PRO_1000071162" description="4-diphosphocytidyl-2-C-methyl-D-erythritol kinase">
    <location>
        <begin position="1"/>
        <end position="255"/>
    </location>
</feature>
<feature type="active site" evidence="1">
    <location>
        <position position="6"/>
    </location>
</feature>
<feature type="active site" evidence="1">
    <location>
        <position position="137"/>
    </location>
</feature>
<feature type="binding site" evidence="1">
    <location>
        <begin position="95"/>
        <end position="105"/>
    </location>
    <ligand>
        <name>ATP</name>
        <dbReference type="ChEBI" id="CHEBI:30616"/>
    </ligand>
</feature>
<evidence type="ECO:0000255" key="1">
    <source>
        <dbReference type="HAMAP-Rule" id="MF_00061"/>
    </source>
</evidence>
<name>ISPE_CAMJ8</name>
<sequence length="255" mass="29242">MKAYAKANIFLKLTGFDSRKYHLLESRFILLKDLFDELELVDKESDSKKEFEIISNFKCENNIIQKAYLLLSKRYNNELKELFSKKSLKLTKNIPVCAGLGGGSSDCASFLLLMNETLNLKLNLQELINLSIQLGSDIAFFLSGFHSANVSGCGEIIEEFEDDIPNLKWTFPQISCQTKAVYDEFDRGIFDFQKNNNQAQIYKKLSTKELLQNFKNKELNDLFTPCATLYPKMKSYLQEDFFLSGSGSSVFKVDR</sequence>
<keyword id="KW-0067">ATP-binding</keyword>
<keyword id="KW-0414">Isoprene biosynthesis</keyword>
<keyword id="KW-0418">Kinase</keyword>
<keyword id="KW-0547">Nucleotide-binding</keyword>
<keyword id="KW-0808">Transferase</keyword>
<gene>
    <name evidence="1" type="primary">ispE</name>
    <name type="ordered locus">C8J_1045</name>
</gene>
<reference key="1">
    <citation type="journal article" date="2007" name="J. Bacteriol.">
        <title>The complete genome sequence of Campylobacter jejuni strain 81116 (NCTC11828).</title>
        <authorList>
            <person name="Pearson B.M."/>
            <person name="Gaskin D.J.H."/>
            <person name="Segers R.P.A.M."/>
            <person name="Wells J.M."/>
            <person name="Nuijten P.J.M."/>
            <person name="van Vliet A.H.M."/>
        </authorList>
    </citation>
    <scope>NUCLEOTIDE SEQUENCE [LARGE SCALE GENOMIC DNA]</scope>
    <source>
        <strain>81116 / NCTC 11828</strain>
    </source>
</reference>
<accession>A8FMF7</accession>
<protein>
    <recommendedName>
        <fullName evidence="1">4-diphosphocytidyl-2-C-methyl-D-erythritol kinase</fullName>
        <shortName evidence="1">CMK</shortName>
        <ecNumber evidence="1">2.7.1.148</ecNumber>
    </recommendedName>
    <alternativeName>
        <fullName evidence="1">4-(cytidine-5'-diphospho)-2-C-methyl-D-erythritol kinase</fullName>
    </alternativeName>
</protein>
<comment type="function">
    <text evidence="1">Catalyzes the phosphorylation of the position 2 hydroxy group of 4-diphosphocytidyl-2C-methyl-D-erythritol.</text>
</comment>
<comment type="catalytic activity">
    <reaction evidence="1">
        <text>4-CDP-2-C-methyl-D-erythritol + ATP = 4-CDP-2-C-methyl-D-erythritol 2-phosphate + ADP + H(+)</text>
        <dbReference type="Rhea" id="RHEA:18437"/>
        <dbReference type="ChEBI" id="CHEBI:15378"/>
        <dbReference type="ChEBI" id="CHEBI:30616"/>
        <dbReference type="ChEBI" id="CHEBI:57823"/>
        <dbReference type="ChEBI" id="CHEBI:57919"/>
        <dbReference type="ChEBI" id="CHEBI:456216"/>
        <dbReference type="EC" id="2.7.1.148"/>
    </reaction>
</comment>
<comment type="pathway">
    <text evidence="1">Isoprenoid biosynthesis; isopentenyl diphosphate biosynthesis via DXP pathway; isopentenyl diphosphate from 1-deoxy-D-xylulose 5-phosphate: step 3/6.</text>
</comment>
<comment type="similarity">
    <text evidence="1">Belongs to the GHMP kinase family. IspE subfamily.</text>
</comment>
<dbReference type="EC" id="2.7.1.148" evidence="1"/>
<dbReference type="EMBL" id="CP000814">
    <property type="protein sequence ID" value="ABV52644.1"/>
    <property type="molecule type" value="Genomic_DNA"/>
</dbReference>
<dbReference type="RefSeq" id="WP_002877773.1">
    <property type="nucleotide sequence ID" value="NC_009839.1"/>
</dbReference>
<dbReference type="SMR" id="A8FMF7"/>
<dbReference type="KEGG" id="cju:C8J_1045"/>
<dbReference type="HOGENOM" id="CLU_053057_2_2_7"/>
<dbReference type="UniPathway" id="UPA00056">
    <property type="reaction ID" value="UER00094"/>
</dbReference>
<dbReference type="GO" id="GO:0050515">
    <property type="term" value="F:4-(cytidine 5'-diphospho)-2-C-methyl-D-erythritol kinase activity"/>
    <property type="evidence" value="ECO:0007669"/>
    <property type="project" value="UniProtKB-UniRule"/>
</dbReference>
<dbReference type="GO" id="GO:0005524">
    <property type="term" value="F:ATP binding"/>
    <property type="evidence" value="ECO:0007669"/>
    <property type="project" value="UniProtKB-UniRule"/>
</dbReference>
<dbReference type="GO" id="GO:0019288">
    <property type="term" value="P:isopentenyl diphosphate biosynthetic process, methylerythritol 4-phosphate pathway"/>
    <property type="evidence" value="ECO:0007669"/>
    <property type="project" value="UniProtKB-UniRule"/>
</dbReference>
<dbReference type="GO" id="GO:0016114">
    <property type="term" value="P:terpenoid biosynthetic process"/>
    <property type="evidence" value="ECO:0007669"/>
    <property type="project" value="InterPro"/>
</dbReference>
<dbReference type="Gene3D" id="3.30.230.10">
    <property type="match status" value="1"/>
</dbReference>
<dbReference type="Gene3D" id="3.30.70.890">
    <property type="entry name" value="GHMP kinase, C-terminal domain"/>
    <property type="match status" value="1"/>
</dbReference>
<dbReference type="HAMAP" id="MF_00061">
    <property type="entry name" value="IspE"/>
    <property type="match status" value="1"/>
</dbReference>
<dbReference type="InterPro" id="IPR036554">
    <property type="entry name" value="GHMP_kinase_C_sf"/>
</dbReference>
<dbReference type="InterPro" id="IPR006204">
    <property type="entry name" value="GHMP_kinase_N_dom"/>
</dbReference>
<dbReference type="InterPro" id="IPR004424">
    <property type="entry name" value="IspE"/>
</dbReference>
<dbReference type="InterPro" id="IPR020568">
    <property type="entry name" value="Ribosomal_Su5_D2-typ_SF"/>
</dbReference>
<dbReference type="InterPro" id="IPR014721">
    <property type="entry name" value="Ribsml_uS5_D2-typ_fold_subgr"/>
</dbReference>
<dbReference type="NCBIfam" id="TIGR00154">
    <property type="entry name" value="ispE"/>
    <property type="match status" value="1"/>
</dbReference>
<dbReference type="NCBIfam" id="NF003216">
    <property type="entry name" value="PRK04181.1"/>
    <property type="match status" value="1"/>
</dbReference>
<dbReference type="PANTHER" id="PTHR43527">
    <property type="entry name" value="4-DIPHOSPHOCYTIDYL-2-C-METHYL-D-ERYTHRITOL KINASE, CHLOROPLASTIC"/>
    <property type="match status" value="1"/>
</dbReference>
<dbReference type="PANTHER" id="PTHR43527:SF2">
    <property type="entry name" value="4-DIPHOSPHOCYTIDYL-2-C-METHYL-D-ERYTHRITOL KINASE, CHLOROPLASTIC"/>
    <property type="match status" value="1"/>
</dbReference>
<dbReference type="Pfam" id="PF00288">
    <property type="entry name" value="GHMP_kinases_N"/>
    <property type="match status" value="1"/>
</dbReference>
<dbReference type="PIRSF" id="PIRSF010376">
    <property type="entry name" value="IspE"/>
    <property type="match status" value="1"/>
</dbReference>
<dbReference type="SUPFAM" id="SSF55060">
    <property type="entry name" value="GHMP Kinase, C-terminal domain"/>
    <property type="match status" value="1"/>
</dbReference>
<dbReference type="SUPFAM" id="SSF54211">
    <property type="entry name" value="Ribosomal protein S5 domain 2-like"/>
    <property type="match status" value="1"/>
</dbReference>
<proteinExistence type="inferred from homology"/>